<organism>
    <name type="scientific">Mannheimia succiniciproducens (strain KCTC 0769BP / MBEL55E)</name>
    <dbReference type="NCBI Taxonomy" id="221988"/>
    <lineage>
        <taxon>Bacteria</taxon>
        <taxon>Pseudomonadati</taxon>
        <taxon>Pseudomonadota</taxon>
        <taxon>Gammaproteobacteria</taxon>
        <taxon>Pasteurellales</taxon>
        <taxon>Pasteurellaceae</taxon>
        <taxon>Basfia</taxon>
    </lineage>
</organism>
<protein>
    <recommendedName>
        <fullName evidence="1">ATP synthase subunit a</fullName>
    </recommendedName>
    <alternativeName>
        <fullName evidence="1">ATP synthase F0 sector subunit a</fullName>
    </alternativeName>
    <alternativeName>
        <fullName evidence="1">F-ATPase subunit 6</fullName>
    </alternativeName>
</protein>
<proteinExistence type="inferred from homology"/>
<accession>Q65Q01</accession>
<comment type="function">
    <text evidence="1">Key component of the proton channel; it plays a direct role in the translocation of protons across the membrane.</text>
</comment>
<comment type="subunit">
    <text evidence="1">F-type ATPases have 2 components, CF(1) - the catalytic core - and CF(0) - the membrane proton channel. CF(1) has five subunits: alpha(3), beta(3), gamma(1), delta(1), epsilon(1). CF(0) has three main subunits: a(1), b(2) and c(9-12). The alpha and beta chains form an alternating ring which encloses part of the gamma chain. CF(1) is attached to CF(0) by a central stalk formed by the gamma and epsilon chains, while a peripheral stalk is formed by the delta and b chains.</text>
</comment>
<comment type="subcellular location">
    <subcellularLocation>
        <location evidence="1">Cell inner membrane</location>
        <topology evidence="1">Multi-pass membrane protein</topology>
    </subcellularLocation>
</comment>
<comment type="similarity">
    <text evidence="1">Belongs to the ATPase A chain family.</text>
</comment>
<evidence type="ECO:0000255" key="1">
    <source>
        <dbReference type="HAMAP-Rule" id="MF_01393"/>
    </source>
</evidence>
<feature type="chain" id="PRO_0000362341" description="ATP synthase subunit a">
    <location>
        <begin position="1"/>
        <end position="262"/>
    </location>
</feature>
<feature type="transmembrane region" description="Helical" evidence="1">
    <location>
        <begin position="25"/>
        <end position="45"/>
    </location>
</feature>
<feature type="transmembrane region" description="Helical" evidence="1">
    <location>
        <begin position="86"/>
        <end position="106"/>
    </location>
</feature>
<feature type="transmembrane region" description="Helical" evidence="1">
    <location>
        <begin position="130"/>
        <end position="150"/>
    </location>
</feature>
<feature type="transmembrane region" description="Helical" evidence="1">
    <location>
        <begin position="204"/>
        <end position="226"/>
    </location>
</feature>
<feature type="transmembrane region" description="Helical" evidence="1">
    <location>
        <begin position="240"/>
        <end position="260"/>
    </location>
</feature>
<dbReference type="EMBL" id="AE016827">
    <property type="protein sequence ID" value="AAU38959.1"/>
    <property type="molecule type" value="Genomic_DNA"/>
</dbReference>
<dbReference type="RefSeq" id="WP_011201497.1">
    <property type="nucleotide sequence ID" value="NC_006300.1"/>
</dbReference>
<dbReference type="SMR" id="Q65Q01"/>
<dbReference type="STRING" id="221988.MS2352"/>
<dbReference type="KEGG" id="msu:MS2352"/>
<dbReference type="eggNOG" id="COG0356">
    <property type="taxonomic scope" value="Bacteria"/>
</dbReference>
<dbReference type="HOGENOM" id="CLU_041018_1_0_6"/>
<dbReference type="OrthoDB" id="9789241at2"/>
<dbReference type="Proteomes" id="UP000000607">
    <property type="component" value="Chromosome"/>
</dbReference>
<dbReference type="GO" id="GO:0005886">
    <property type="term" value="C:plasma membrane"/>
    <property type="evidence" value="ECO:0007669"/>
    <property type="project" value="UniProtKB-SubCell"/>
</dbReference>
<dbReference type="GO" id="GO:0045259">
    <property type="term" value="C:proton-transporting ATP synthase complex"/>
    <property type="evidence" value="ECO:0007669"/>
    <property type="project" value="UniProtKB-KW"/>
</dbReference>
<dbReference type="GO" id="GO:0046933">
    <property type="term" value="F:proton-transporting ATP synthase activity, rotational mechanism"/>
    <property type="evidence" value="ECO:0007669"/>
    <property type="project" value="UniProtKB-UniRule"/>
</dbReference>
<dbReference type="GO" id="GO:0042777">
    <property type="term" value="P:proton motive force-driven plasma membrane ATP synthesis"/>
    <property type="evidence" value="ECO:0007669"/>
    <property type="project" value="TreeGrafter"/>
</dbReference>
<dbReference type="CDD" id="cd00310">
    <property type="entry name" value="ATP-synt_Fo_a_6"/>
    <property type="match status" value="1"/>
</dbReference>
<dbReference type="FunFam" id="1.20.120.220:FF:000002">
    <property type="entry name" value="ATP synthase subunit a"/>
    <property type="match status" value="1"/>
</dbReference>
<dbReference type="Gene3D" id="1.20.120.220">
    <property type="entry name" value="ATP synthase, F0 complex, subunit A"/>
    <property type="match status" value="1"/>
</dbReference>
<dbReference type="HAMAP" id="MF_01393">
    <property type="entry name" value="ATP_synth_a_bact"/>
    <property type="match status" value="1"/>
</dbReference>
<dbReference type="InterPro" id="IPR045082">
    <property type="entry name" value="ATP_syn_F0_a_bact/chloroplast"/>
</dbReference>
<dbReference type="InterPro" id="IPR000568">
    <property type="entry name" value="ATP_synth_F0_asu"/>
</dbReference>
<dbReference type="InterPro" id="IPR023011">
    <property type="entry name" value="ATP_synth_F0_asu_AS"/>
</dbReference>
<dbReference type="InterPro" id="IPR035908">
    <property type="entry name" value="F0_ATP_A_sf"/>
</dbReference>
<dbReference type="NCBIfam" id="TIGR01131">
    <property type="entry name" value="ATP_synt_6_or_A"/>
    <property type="match status" value="1"/>
</dbReference>
<dbReference type="NCBIfam" id="NF004477">
    <property type="entry name" value="PRK05815.1-1"/>
    <property type="match status" value="1"/>
</dbReference>
<dbReference type="PANTHER" id="PTHR42823">
    <property type="entry name" value="ATP SYNTHASE SUBUNIT A, CHLOROPLASTIC"/>
    <property type="match status" value="1"/>
</dbReference>
<dbReference type="PANTHER" id="PTHR42823:SF3">
    <property type="entry name" value="ATP SYNTHASE SUBUNIT A, CHLOROPLASTIC"/>
    <property type="match status" value="1"/>
</dbReference>
<dbReference type="Pfam" id="PF00119">
    <property type="entry name" value="ATP-synt_A"/>
    <property type="match status" value="1"/>
</dbReference>
<dbReference type="PRINTS" id="PR00123">
    <property type="entry name" value="ATPASEA"/>
</dbReference>
<dbReference type="SUPFAM" id="SSF81336">
    <property type="entry name" value="F1F0 ATP synthase subunit A"/>
    <property type="match status" value="1"/>
</dbReference>
<dbReference type="PROSITE" id="PS00449">
    <property type="entry name" value="ATPASE_A"/>
    <property type="match status" value="1"/>
</dbReference>
<gene>
    <name evidence="1" type="primary">atpB</name>
    <name type="ordered locus">MS2352</name>
</gene>
<name>ATP6_MANSM</name>
<sequence length="262" mass="29039">MSGQTTSEYIGHHLQFLKTGDSFWNVHIDTLFFSVLAAIIFLAVFRSVAKKATSGVPGKLQCMVEILVEWINGIVKENFHGPRNVVAPLALTIFCWVFIMNAIDLIPVDFLPQLAGLFGIHYLRAVPTADISATLGMSLCVFALILFYTVKSKGFGGLVKEYTLHPFNHWSLIPVNFVLESVTLLAKPISLAFRLFGNMYAGELIFILIAVMYSANAAIAALGIPLHLAWAIFHILIVTLQAFIFMMLTVVYLSIAYNKAEH</sequence>
<keyword id="KW-0066">ATP synthesis</keyword>
<keyword id="KW-0997">Cell inner membrane</keyword>
<keyword id="KW-1003">Cell membrane</keyword>
<keyword id="KW-0138">CF(0)</keyword>
<keyword id="KW-0375">Hydrogen ion transport</keyword>
<keyword id="KW-0406">Ion transport</keyword>
<keyword id="KW-0472">Membrane</keyword>
<keyword id="KW-0812">Transmembrane</keyword>
<keyword id="KW-1133">Transmembrane helix</keyword>
<keyword id="KW-0813">Transport</keyword>
<reference key="1">
    <citation type="journal article" date="2004" name="Nat. Biotechnol.">
        <title>The genome sequence of the capnophilic rumen bacterium Mannheimia succiniciproducens.</title>
        <authorList>
            <person name="Hong S.H."/>
            <person name="Kim J.S."/>
            <person name="Lee S.Y."/>
            <person name="In Y.H."/>
            <person name="Choi S.S."/>
            <person name="Rih J.-K."/>
            <person name="Kim C.H."/>
            <person name="Jeong H."/>
            <person name="Hur C.G."/>
            <person name="Kim J.J."/>
        </authorList>
    </citation>
    <scope>NUCLEOTIDE SEQUENCE [LARGE SCALE GENOMIC DNA]</scope>
    <source>
        <strain>KCTC 0769BP / MBEL55E</strain>
    </source>
</reference>